<protein>
    <recommendedName>
        <fullName evidence="5">Glycerol uptake facilitator protein-like 5</fullName>
    </recommendedName>
</protein>
<dbReference type="EMBL" id="AL935263">
    <property type="protein sequence ID" value="CCC80415.1"/>
    <property type="molecule type" value="Genomic_DNA"/>
</dbReference>
<dbReference type="RefSeq" id="WP_003643022.1">
    <property type="nucleotide sequence ID" value="NC_004567.2"/>
</dbReference>
<dbReference type="RefSeq" id="YP_004890929.1">
    <property type="nucleotide sequence ID" value="NC_004567.2"/>
</dbReference>
<dbReference type="SMR" id="F9UUB3"/>
<dbReference type="STRING" id="220668.lp_3436"/>
<dbReference type="EnsemblBacteria" id="CCC80415">
    <property type="protein sequence ID" value="CCC80415"/>
    <property type="gene ID" value="lp_3436"/>
</dbReference>
<dbReference type="KEGG" id="lpl:lp_3436"/>
<dbReference type="PATRIC" id="fig|220668.9.peg.2863"/>
<dbReference type="eggNOG" id="COG0580">
    <property type="taxonomic scope" value="Bacteria"/>
</dbReference>
<dbReference type="HOGENOM" id="CLU_020019_9_2_9"/>
<dbReference type="OrthoDB" id="9807293at2"/>
<dbReference type="PhylomeDB" id="F9UUB3"/>
<dbReference type="Proteomes" id="UP000000432">
    <property type="component" value="Chromosome"/>
</dbReference>
<dbReference type="GO" id="GO:0005886">
    <property type="term" value="C:plasma membrane"/>
    <property type="evidence" value="ECO:0007669"/>
    <property type="project" value="UniProtKB-SubCell"/>
</dbReference>
<dbReference type="GO" id="GO:0015254">
    <property type="term" value="F:glycerol channel activity"/>
    <property type="evidence" value="ECO:0007669"/>
    <property type="project" value="TreeGrafter"/>
</dbReference>
<dbReference type="CDD" id="cd00333">
    <property type="entry name" value="MIP"/>
    <property type="match status" value="1"/>
</dbReference>
<dbReference type="Gene3D" id="1.20.1080.10">
    <property type="entry name" value="Glycerol uptake facilitator protein"/>
    <property type="match status" value="1"/>
</dbReference>
<dbReference type="InterPro" id="IPR023271">
    <property type="entry name" value="Aquaporin-like"/>
</dbReference>
<dbReference type="InterPro" id="IPR000425">
    <property type="entry name" value="MIP"/>
</dbReference>
<dbReference type="InterPro" id="IPR050363">
    <property type="entry name" value="MIP/Aquaporin"/>
</dbReference>
<dbReference type="InterPro" id="IPR022357">
    <property type="entry name" value="MIP_CS"/>
</dbReference>
<dbReference type="NCBIfam" id="TIGR00861">
    <property type="entry name" value="MIP"/>
    <property type="match status" value="1"/>
</dbReference>
<dbReference type="PANTHER" id="PTHR43829">
    <property type="entry name" value="AQUAPORIN OR AQUAGLYCEROPORIN RELATED"/>
    <property type="match status" value="1"/>
</dbReference>
<dbReference type="PANTHER" id="PTHR43829:SF9">
    <property type="entry name" value="AQUAPORIN-9"/>
    <property type="match status" value="1"/>
</dbReference>
<dbReference type="Pfam" id="PF00230">
    <property type="entry name" value="MIP"/>
    <property type="match status" value="1"/>
</dbReference>
<dbReference type="PRINTS" id="PR00783">
    <property type="entry name" value="MINTRINSICP"/>
</dbReference>
<dbReference type="SUPFAM" id="SSF81338">
    <property type="entry name" value="Aquaporin-like"/>
    <property type="match status" value="1"/>
</dbReference>
<dbReference type="PROSITE" id="PS00221">
    <property type="entry name" value="MIP"/>
    <property type="match status" value="1"/>
</dbReference>
<sequence>MTGSWEARYAAEFFGTLILVLLGNGAVANAFLKNTTGNDDPGLANGGWLLVASGYGLGVMLPAMMFGSISGNHLNPAITIGQAVIGIFPWAHVAPYLIWQFLGAIAGQCLILALYWPHYRQTTDNEAVLGTFATSDHANSQLNGFVTEMVGTAVLIFGAMGLYRGMFFHQNIDIANIGVGLLIAAMVISLGGPTGPALNPARDLGPRLVHALFPVPNKGSSHWEYSWVPVVAPIVGAVIGIWIYKIFFGL</sequence>
<accession>F9UUB3</accession>
<organism>
    <name type="scientific">Lactiplantibacillus plantarum (strain ATCC BAA-793 / NCIMB 8826 / WCFS1)</name>
    <name type="common">Lactobacillus plantarum</name>
    <dbReference type="NCBI Taxonomy" id="220668"/>
    <lineage>
        <taxon>Bacteria</taxon>
        <taxon>Bacillati</taxon>
        <taxon>Bacillota</taxon>
        <taxon>Bacilli</taxon>
        <taxon>Lactobacillales</taxon>
        <taxon>Lactobacillaceae</taxon>
        <taxon>Lactiplantibacillus</taxon>
    </lineage>
</organism>
<keyword id="KW-1003">Cell membrane</keyword>
<keyword id="KW-0472">Membrane</keyword>
<keyword id="KW-1185">Reference proteome</keyword>
<keyword id="KW-0812">Transmembrane</keyword>
<keyword id="KW-1133">Transmembrane helix</keyword>
<keyword id="KW-0813">Transport</keyword>
<proteinExistence type="inferred from homology"/>
<evidence type="ECO:0000255" key="1"/>
<evidence type="ECO:0000269" key="2">
    <source>
    </source>
</evidence>
<evidence type="ECO:0000303" key="3">
    <source>
    </source>
</evidence>
<evidence type="ECO:0000305" key="4"/>
<evidence type="ECO:0000305" key="5">
    <source>
    </source>
</evidence>
<evidence type="ECO:0000312" key="6">
    <source>
        <dbReference type="EMBL" id="CCC80415.1"/>
    </source>
</evidence>
<name>GLPF5_LACPL</name>
<comment type="function">
    <text evidence="2">Probable transporter that facilitates the transmembrane diffusion of an unknown substrate. Is not permeable to water, dihydroxyacetone, glycerol, urea, H(2)O(2) and D/L-lactic acid.</text>
</comment>
<comment type="subcellular location">
    <subcellularLocation>
        <location evidence="2">Cell membrane</location>
        <topology evidence="1">Multi-pass membrane protein</topology>
    </subcellularLocation>
</comment>
<comment type="similarity">
    <text evidence="4">Belongs to the MIP/aquaporin (TC 1.A.8) family.</text>
</comment>
<feature type="chain" id="PRO_0000441646" description="Glycerol uptake facilitator protein-like 5">
    <location>
        <begin position="1"/>
        <end position="250"/>
    </location>
</feature>
<feature type="transmembrane region" description="Helical" evidence="1">
    <location>
        <begin position="12"/>
        <end position="32"/>
    </location>
</feature>
<feature type="transmembrane region" description="Helical" evidence="1">
    <location>
        <begin position="46"/>
        <end position="66"/>
    </location>
</feature>
<feature type="transmembrane region" description="Helical" evidence="1">
    <location>
        <begin position="85"/>
        <end position="105"/>
    </location>
</feature>
<feature type="transmembrane region" description="Helical" evidence="1">
    <location>
        <begin position="142"/>
        <end position="162"/>
    </location>
</feature>
<feature type="transmembrane region" description="Helical" evidence="1">
    <location>
        <begin position="172"/>
        <end position="192"/>
    </location>
</feature>
<feature type="transmembrane region" description="Helical" evidence="1">
    <location>
        <begin position="230"/>
        <end position="250"/>
    </location>
</feature>
<feature type="short sequence motif" description="NPA 1" evidence="5">
    <location>
        <begin position="75"/>
        <end position="77"/>
    </location>
</feature>
<feature type="short sequence motif" description="NPA 2" evidence="5">
    <location>
        <begin position="199"/>
        <end position="201"/>
    </location>
</feature>
<gene>
    <name evidence="3 6" type="primary">glpF5</name>
    <name evidence="6" type="ordered locus">lp_3436</name>
</gene>
<reference key="1">
    <citation type="journal article" date="2003" name="Proc. Natl. Acad. Sci. U.S.A.">
        <title>Complete genome sequence of Lactobacillus plantarum WCFS1.</title>
        <authorList>
            <person name="Kleerebezem M."/>
            <person name="Boekhorst J."/>
            <person name="van Kranenburg R."/>
            <person name="Molenaar D."/>
            <person name="Kuipers O.P."/>
            <person name="Leer R."/>
            <person name="Tarchini R."/>
            <person name="Peters S.A."/>
            <person name="Sandbrink H.M."/>
            <person name="Fiers M.W.E.J."/>
            <person name="Stiekema W."/>
            <person name="Klein Lankhorst R.M."/>
            <person name="Bron P.A."/>
            <person name="Hoffer S.M."/>
            <person name="Nierop Groot M.N."/>
            <person name="Kerkhoven R."/>
            <person name="De Vries M."/>
            <person name="Ursing B."/>
            <person name="De Vos W.M."/>
            <person name="Siezen R.J."/>
        </authorList>
    </citation>
    <scope>NUCLEOTIDE SEQUENCE [LARGE SCALE GENOMIC DNA]</scope>
    <source>
        <strain>ATCC BAA-793 / NCIMB 8826 / WCFS1</strain>
    </source>
</reference>
<reference key="2">
    <citation type="journal article" date="2012" name="J. Bacteriol.">
        <title>Complete resequencing and reannotation of the Lactobacillus plantarum WCFS1 genome.</title>
        <authorList>
            <person name="Siezen R.J."/>
            <person name="Francke C."/>
            <person name="Renckens B."/>
            <person name="Boekhorst J."/>
            <person name="Wels M."/>
            <person name="Kleerebezem M."/>
            <person name="van Hijum S.A."/>
        </authorList>
    </citation>
    <scope>NUCLEOTIDE SEQUENCE [LARGE SCALE GENOMIC DNA]</scope>
    <scope>GENOME REANNOTATION</scope>
    <source>
        <strain>ATCC BAA-793 / NCIMB 8826 / WCFS1</strain>
    </source>
</reference>
<reference key="3">
    <citation type="journal article" date="2013" name="Biochem. J.">
        <title>Channel-mediated lactic acid transport: a novel function for aquaglyceroporins in bacteria.</title>
        <authorList>
            <person name="Bienert G.P."/>
            <person name="Desguin B."/>
            <person name="Chaumont F."/>
            <person name="Hols P."/>
        </authorList>
    </citation>
    <scope>FUNCTION</scope>
    <scope>SUBCELLULAR LOCATION</scope>
    <source>
        <strain>ATCC BAA-793 / NCIMB 8826 / WCFS1</strain>
    </source>
</reference>